<accession>B9DYB8</accession>
<protein>
    <recommendedName>
        <fullName evidence="1">Small ribosomal subunit protein uS17</fullName>
    </recommendedName>
    <alternativeName>
        <fullName evidence="2">30S ribosomal protein S17</fullName>
    </alternativeName>
</protein>
<evidence type="ECO:0000255" key="1">
    <source>
        <dbReference type="HAMAP-Rule" id="MF_01345"/>
    </source>
</evidence>
<evidence type="ECO:0000305" key="2"/>
<dbReference type="EMBL" id="AP009049">
    <property type="protein sequence ID" value="BAH05243.1"/>
    <property type="molecule type" value="Genomic_DNA"/>
</dbReference>
<dbReference type="RefSeq" id="WP_011988812.1">
    <property type="nucleotide sequence ID" value="NC_011837.1"/>
</dbReference>
<dbReference type="SMR" id="B9DYB8"/>
<dbReference type="KEGG" id="ckr:CKR_0192"/>
<dbReference type="HOGENOM" id="CLU_073626_1_0_9"/>
<dbReference type="Proteomes" id="UP000007969">
    <property type="component" value="Chromosome"/>
</dbReference>
<dbReference type="GO" id="GO:0022627">
    <property type="term" value="C:cytosolic small ribosomal subunit"/>
    <property type="evidence" value="ECO:0007669"/>
    <property type="project" value="TreeGrafter"/>
</dbReference>
<dbReference type="GO" id="GO:0019843">
    <property type="term" value="F:rRNA binding"/>
    <property type="evidence" value="ECO:0007669"/>
    <property type="project" value="UniProtKB-UniRule"/>
</dbReference>
<dbReference type="GO" id="GO:0003735">
    <property type="term" value="F:structural constituent of ribosome"/>
    <property type="evidence" value="ECO:0007669"/>
    <property type="project" value="InterPro"/>
</dbReference>
<dbReference type="GO" id="GO:0006412">
    <property type="term" value="P:translation"/>
    <property type="evidence" value="ECO:0007669"/>
    <property type="project" value="UniProtKB-UniRule"/>
</dbReference>
<dbReference type="CDD" id="cd00364">
    <property type="entry name" value="Ribosomal_uS17"/>
    <property type="match status" value="1"/>
</dbReference>
<dbReference type="FunFam" id="2.40.50.140:FF:000123">
    <property type="entry name" value="30S ribosomal protein S17"/>
    <property type="match status" value="1"/>
</dbReference>
<dbReference type="Gene3D" id="2.40.50.140">
    <property type="entry name" value="Nucleic acid-binding proteins"/>
    <property type="match status" value="1"/>
</dbReference>
<dbReference type="HAMAP" id="MF_01345_B">
    <property type="entry name" value="Ribosomal_uS17_B"/>
    <property type="match status" value="1"/>
</dbReference>
<dbReference type="InterPro" id="IPR012340">
    <property type="entry name" value="NA-bd_OB-fold"/>
</dbReference>
<dbReference type="InterPro" id="IPR000266">
    <property type="entry name" value="Ribosomal_uS17"/>
</dbReference>
<dbReference type="InterPro" id="IPR019984">
    <property type="entry name" value="Ribosomal_uS17_bact/chlr"/>
</dbReference>
<dbReference type="NCBIfam" id="NF004123">
    <property type="entry name" value="PRK05610.1"/>
    <property type="match status" value="1"/>
</dbReference>
<dbReference type="NCBIfam" id="TIGR03635">
    <property type="entry name" value="uS17_bact"/>
    <property type="match status" value="1"/>
</dbReference>
<dbReference type="PANTHER" id="PTHR10744">
    <property type="entry name" value="40S RIBOSOMAL PROTEIN S11 FAMILY MEMBER"/>
    <property type="match status" value="1"/>
</dbReference>
<dbReference type="PANTHER" id="PTHR10744:SF1">
    <property type="entry name" value="SMALL RIBOSOMAL SUBUNIT PROTEIN US17M"/>
    <property type="match status" value="1"/>
</dbReference>
<dbReference type="Pfam" id="PF00366">
    <property type="entry name" value="Ribosomal_S17"/>
    <property type="match status" value="1"/>
</dbReference>
<dbReference type="PRINTS" id="PR00973">
    <property type="entry name" value="RIBOSOMALS17"/>
</dbReference>
<dbReference type="SUPFAM" id="SSF50249">
    <property type="entry name" value="Nucleic acid-binding proteins"/>
    <property type="match status" value="1"/>
</dbReference>
<keyword id="KW-0687">Ribonucleoprotein</keyword>
<keyword id="KW-0689">Ribosomal protein</keyword>
<keyword id="KW-0694">RNA-binding</keyword>
<keyword id="KW-0699">rRNA-binding</keyword>
<gene>
    <name evidence="1" type="primary">rpsQ</name>
    <name type="ordered locus">CKR_0192</name>
</gene>
<reference key="1">
    <citation type="submission" date="2005-09" db="EMBL/GenBank/DDBJ databases">
        <title>Complete genome sequence of Clostridium kluyveri and comparative genomics of Clostridia species.</title>
        <authorList>
            <person name="Inui M."/>
            <person name="Nonaka H."/>
            <person name="Shinoda Y."/>
            <person name="Ikenaga Y."/>
            <person name="Abe M."/>
            <person name="Naito K."/>
            <person name="Vertes A.A."/>
            <person name="Yukawa H."/>
        </authorList>
    </citation>
    <scope>NUCLEOTIDE SEQUENCE [LARGE SCALE GENOMIC DNA]</scope>
    <source>
        <strain>NBRC 12016</strain>
    </source>
</reference>
<feature type="chain" id="PRO_1000166471" description="Small ribosomal subunit protein uS17">
    <location>
        <begin position="1"/>
        <end position="84"/>
    </location>
</feature>
<comment type="function">
    <text evidence="1">One of the primary rRNA binding proteins, it binds specifically to the 5'-end of 16S ribosomal RNA.</text>
</comment>
<comment type="subunit">
    <text evidence="1">Part of the 30S ribosomal subunit.</text>
</comment>
<comment type="similarity">
    <text evidence="1">Belongs to the universal ribosomal protein uS17 family.</text>
</comment>
<name>RS17_CLOK1</name>
<proteinExistence type="inferred from homology"/>
<sequence>MERGYRKTRIGTVTSDKMDKTIVVAVENRVRHPLYGKIIKKTSKFKAHDENNEAKNNDKVLIMETRPLSKDKRWRLVEIVEKAK</sequence>
<organism>
    <name type="scientific">Clostridium kluyveri (strain NBRC 12016)</name>
    <dbReference type="NCBI Taxonomy" id="583346"/>
    <lineage>
        <taxon>Bacteria</taxon>
        <taxon>Bacillati</taxon>
        <taxon>Bacillota</taxon>
        <taxon>Clostridia</taxon>
        <taxon>Eubacteriales</taxon>
        <taxon>Clostridiaceae</taxon>
        <taxon>Clostridium</taxon>
    </lineage>
</organism>